<reference key="1">
    <citation type="submission" date="2007-08" db="EMBL/GenBank/DDBJ databases">
        <title>Complete sequence of Shewanella sediminis HAW-EB3.</title>
        <authorList>
            <consortium name="US DOE Joint Genome Institute"/>
            <person name="Copeland A."/>
            <person name="Lucas S."/>
            <person name="Lapidus A."/>
            <person name="Barry K."/>
            <person name="Glavina del Rio T."/>
            <person name="Dalin E."/>
            <person name="Tice H."/>
            <person name="Pitluck S."/>
            <person name="Chertkov O."/>
            <person name="Brettin T."/>
            <person name="Bruce D."/>
            <person name="Detter J.C."/>
            <person name="Han C."/>
            <person name="Schmutz J."/>
            <person name="Larimer F."/>
            <person name="Land M."/>
            <person name="Hauser L."/>
            <person name="Kyrpides N."/>
            <person name="Kim E."/>
            <person name="Zhao J.-S."/>
            <person name="Richardson P."/>
        </authorList>
    </citation>
    <scope>NUCLEOTIDE SEQUENCE [LARGE SCALE GENOMIC DNA]</scope>
    <source>
        <strain>HAW-EB3</strain>
    </source>
</reference>
<organism>
    <name type="scientific">Shewanella sediminis (strain HAW-EB3)</name>
    <dbReference type="NCBI Taxonomy" id="425104"/>
    <lineage>
        <taxon>Bacteria</taxon>
        <taxon>Pseudomonadati</taxon>
        <taxon>Pseudomonadota</taxon>
        <taxon>Gammaproteobacteria</taxon>
        <taxon>Alteromonadales</taxon>
        <taxon>Shewanellaceae</taxon>
        <taxon>Shewanella</taxon>
    </lineage>
</organism>
<gene>
    <name evidence="1" type="primary">hldE</name>
    <name type="ordered locus">Ssed_3812</name>
</gene>
<feature type="chain" id="PRO_1000088026" description="Bifunctional protein HldE">
    <location>
        <begin position="1"/>
        <end position="476"/>
    </location>
</feature>
<feature type="region of interest" description="Ribokinase">
    <location>
        <begin position="1"/>
        <end position="319"/>
    </location>
</feature>
<feature type="region of interest" description="Cytidylyltransferase">
    <location>
        <begin position="345"/>
        <end position="476"/>
    </location>
</feature>
<feature type="active site" evidence="1">
    <location>
        <position position="264"/>
    </location>
</feature>
<feature type="binding site" evidence="1">
    <location>
        <begin position="195"/>
        <end position="198"/>
    </location>
    <ligand>
        <name>ATP</name>
        <dbReference type="ChEBI" id="CHEBI:30616"/>
    </ligand>
</feature>
<name>HLDE_SHESH</name>
<evidence type="ECO:0000255" key="1">
    <source>
        <dbReference type="HAMAP-Rule" id="MF_01603"/>
    </source>
</evidence>
<sequence>MKVSLPAFEKAKVLVVGDVMLDRYWTGPTGRISPEAPVPVVKISQIEDRPGGAANVALNVATLGGQVSLAGIVGKDEAADALTTGIQALGVEPKWHCVEGKPTITKLRVMSRNQQLIRLDFEEAYPEDESKALLTLSESALDNVAVVVLSDYAKGAITQPQEFIQKAIAKGVKVLVDPKGSDFSRYRGASLITPNMGEFEEVVGSVSSEAELVEKAQALLSEFDIEAILVTRSEKGMTLITADAPELHIPTVAREVYDVTGAGDTVISALATSLAAGSDLPQACAIANTAAGIVVAKLGTSTVSRIELIRALSVNHGESGFGAVSEDQLAYALEQARLRGERVVMTNGCFDILHAGHVSYLKQARELGDRLIVAVNDDDSVKRLKGEGRPVNQSDRRMAVLAGLASVDWVVPFTEDTPQRIISRLLPDLLVKGGDYKIEDIAGGKEVIAAGGSVKVLGFEDGVSTTSIIENIMANQ</sequence>
<accession>A8FZZ3</accession>
<comment type="function">
    <text evidence="1">Catalyzes the phosphorylation of D-glycero-D-manno-heptose 7-phosphate at the C-1 position to selectively form D-glycero-beta-D-manno-heptose-1,7-bisphosphate.</text>
</comment>
<comment type="function">
    <text evidence="1">Catalyzes the ADP transfer from ATP to D-glycero-beta-D-manno-heptose 1-phosphate, yielding ADP-D-glycero-beta-D-manno-heptose.</text>
</comment>
<comment type="catalytic activity">
    <reaction evidence="1">
        <text>D-glycero-beta-D-manno-heptose 7-phosphate + ATP = D-glycero-beta-D-manno-heptose 1,7-bisphosphate + ADP + H(+)</text>
        <dbReference type="Rhea" id="RHEA:27473"/>
        <dbReference type="ChEBI" id="CHEBI:15378"/>
        <dbReference type="ChEBI" id="CHEBI:30616"/>
        <dbReference type="ChEBI" id="CHEBI:60204"/>
        <dbReference type="ChEBI" id="CHEBI:60208"/>
        <dbReference type="ChEBI" id="CHEBI:456216"/>
        <dbReference type="EC" id="2.7.1.167"/>
    </reaction>
</comment>
<comment type="catalytic activity">
    <reaction evidence="1">
        <text>D-glycero-beta-D-manno-heptose 1-phosphate + ATP + H(+) = ADP-D-glycero-beta-D-manno-heptose + diphosphate</text>
        <dbReference type="Rhea" id="RHEA:27465"/>
        <dbReference type="ChEBI" id="CHEBI:15378"/>
        <dbReference type="ChEBI" id="CHEBI:30616"/>
        <dbReference type="ChEBI" id="CHEBI:33019"/>
        <dbReference type="ChEBI" id="CHEBI:59967"/>
        <dbReference type="ChEBI" id="CHEBI:61593"/>
        <dbReference type="EC" id="2.7.7.70"/>
    </reaction>
</comment>
<comment type="pathway">
    <text evidence="1">Nucleotide-sugar biosynthesis; ADP-L-glycero-beta-D-manno-heptose biosynthesis; ADP-L-glycero-beta-D-manno-heptose from D-glycero-beta-D-manno-heptose 7-phosphate: step 1/4.</text>
</comment>
<comment type="pathway">
    <text evidence="1">Nucleotide-sugar biosynthesis; ADP-L-glycero-beta-D-manno-heptose biosynthesis; ADP-L-glycero-beta-D-manno-heptose from D-glycero-beta-D-manno-heptose 7-phosphate: step 3/4.</text>
</comment>
<comment type="subunit">
    <text evidence="1">Homodimer.</text>
</comment>
<comment type="similarity">
    <text evidence="1">In the N-terminal section; belongs to the carbohydrate kinase PfkB family.</text>
</comment>
<comment type="similarity">
    <text evidence="1">In the C-terminal section; belongs to the cytidylyltransferase family.</text>
</comment>
<protein>
    <recommendedName>
        <fullName evidence="1">Bifunctional protein HldE</fullName>
    </recommendedName>
    <domain>
        <recommendedName>
            <fullName evidence="1">D-beta-D-heptose 7-phosphate kinase</fullName>
            <ecNumber evidence="1">2.7.1.167</ecNumber>
        </recommendedName>
        <alternativeName>
            <fullName evidence="1">D-beta-D-heptose 7-phosphotransferase</fullName>
        </alternativeName>
        <alternativeName>
            <fullName evidence="1">D-glycero-beta-D-manno-heptose-7-phosphate kinase</fullName>
        </alternativeName>
    </domain>
    <domain>
        <recommendedName>
            <fullName evidence="1">D-beta-D-heptose 1-phosphate adenylyltransferase</fullName>
            <ecNumber evidence="1">2.7.7.70</ecNumber>
        </recommendedName>
        <alternativeName>
            <fullName evidence="1">D-glycero-beta-D-manno-heptose 1-phosphate adenylyltransferase</fullName>
        </alternativeName>
    </domain>
</protein>
<proteinExistence type="inferred from homology"/>
<dbReference type="EC" id="2.7.1.167" evidence="1"/>
<dbReference type="EC" id="2.7.7.70" evidence="1"/>
<dbReference type="EMBL" id="CP000821">
    <property type="protein sequence ID" value="ABV38416.1"/>
    <property type="molecule type" value="Genomic_DNA"/>
</dbReference>
<dbReference type="RefSeq" id="WP_012144146.1">
    <property type="nucleotide sequence ID" value="NC_009831.1"/>
</dbReference>
<dbReference type="SMR" id="A8FZZ3"/>
<dbReference type="STRING" id="425104.Ssed_3812"/>
<dbReference type="KEGG" id="sse:Ssed_3812"/>
<dbReference type="eggNOG" id="COG0615">
    <property type="taxonomic scope" value="Bacteria"/>
</dbReference>
<dbReference type="eggNOG" id="COG2870">
    <property type="taxonomic scope" value="Bacteria"/>
</dbReference>
<dbReference type="HOGENOM" id="CLU_021150_2_1_6"/>
<dbReference type="OrthoDB" id="9802794at2"/>
<dbReference type="UniPathway" id="UPA00356">
    <property type="reaction ID" value="UER00437"/>
</dbReference>
<dbReference type="UniPathway" id="UPA00356">
    <property type="reaction ID" value="UER00439"/>
</dbReference>
<dbReference type="Proteomes" id="UP000002015">
    <property type="component" value="Chromosome"/>
</dbReference>
<dbReference type="GO" id="GO:0005829">
    <property type="term" value="C:cytosol"/>
    <property type="evidence" value="ECO:0007669"/>
    <property type="project" value="TreeGrafter"/>
</dbReference>
<dbReference type="GO" id="GO:0005524">
    <property type="term" value="F:ATP binding"/>
    <property type="evidence" value="ECO:0007669"/>
    <property type="project" value="UniProtKB-UniRule"/>
</dbReference>
<dbReference type="GO" id="GO:0033785">
    <property type="term" value="F:heptose 7-phosphate kinase activity"/>
    <property type="evidence" value="ECO:0007669"/>
    <property type="project" value="UniProtKB-UniRule"/>
</dbReference>
<dbReference type="GO" id="GO:0033786">
    <property type="term" value="F:heptose-1-phosphate adenylyltransferase activity"/>
    <property type="evidence" value="ECO:0007669"/>
    <property type="project" value="UniProtKB-UniRule"/>
</dbReference>
<dbReference type="GO" id="GO:0016773">
    <property type="term" value="F:phosphotransferase activity, alcohol group as acceptor"/>
    <property type="evidence" value="ECO:0007669"/>
    <property type="project" value="InterPro"/>
</dbReference>
<dbReference type="GO" id="GO:0097171">
    <property type="term" value="P:ADP-L-glycero-beta-D-manno-heptose biosynthetic process"/>
    <property type="evidence" value="ECO:0007669"/>
    <property type="project" value="UniProtKB-UniPathway"/>
</dbReference>
<dbReference type="CDD" id="cd01172">
    <property type="entry name" value="RfaE_like"/>
    <property type="match status" value="1"/>
</dbReference>
<dbReference type="FunFam" id="3.40.1190.20:FF:000002">
    <property type="entry name" value="Bifunctional protein HldE"/>
    <property type="match status" value="1"/>
</dbReference>
<dbReference type="FunFam" id="3.40.50.620:FF:000028">
    <property type="entry name" value="Bifunctional protein HldE"/>
    <property type="match status" value="1"/>
</dbReference>
<dbReference type="Gene3D" id="3.40.1190.20">
    <property type="match status" value="1"/>
</dbReference>
<dbReference type="Gene3D" id="3.40.50.620">
    <property type="entry name" value="HUPs"/>
    <property type="match status" value="1"/>
</dbReference>
<dbReference type="HAMAP" id="MF_01603">
    <property type="entry name" value="HldE"/>
    <property type="match status" value="1"/>
</dbReference>
<dbReference type="InterPro" id="IPR023030">
    <property type="entry name" value="Bifunc_HldE"/>
</dbReference>
<dbReference type="InterPro" id="IPR002173">
    <property type="entry name" value="Carboh/pur_kinase_PfkB_CS"/>
</dbReference>
<dbReference type="InterPro" id="IPR004821">
    <property type="entry name" value="Cyt_trans-like"/>
</dbReference>
<dbReference type="InterPro" id="IPR011611">
    <property type="entry name" value="PfkB_dom"/>
</dbReference>
<dbReference type="InterPro" id="IPR011913">
    <property type="entry name" value="RfaE_dom_I"/>
</dbReference>
<dbReference type="InterPro" id="IPR011914">
    <property type="entry name" value="RfaE_dom_II"/>
</dbReference>
<dbReference type="InterPro" id="IPR029056">
    <property type="entry name" value="Ribokinase-like"/>
</dbReference>
<dbReference type="InterPro" id="IPR014729">
    <property type="entry name" value="Rossmann-like_a/b/a_fold"/>
</dbReference>
<dbReference type="NCBIfam" id="TIGR00125">
    <property type="entry name" value="cyt_tran_rel"/>
    <property type="match status" value="1"/>
</dbReference>
<dbReference type="NCBIfam" id="NF008454">
    <property type="entry name" value="PRK11316.1"/>
    <property type="match status" value="1"/>
</dbReference>
<dbReference type="NCBIfam" id="TIGR02198">
    <property type="entry name" value="rfaE_dom_I"/>
    <property type="match status" value="1"/>
</dbReference>
<dbReference type="NCBIfam" id="TIGR02199">
    <property type="entry name" value="rfaE_dom_II"/>
    <property type="match status" value="1"/>
</dbReference>
<dbReference type="PANTHER" id="PTHR46969">
    <property type="entry name" value="BIFUNCTIONAL PROTEIN HLDE"/>
    <property type="match status" value="1"/>
</dbReference>
<dbReference type="PANTHER" id="PTHR46969:SF1">
    <property type="entry name" value="BIFUNCTIONAL PROTEIN HLDE"/>
    <property type="match status" value="1"/>
</dbReference>
<dbReference type="Pfam" id="PF01467">
    <property type="entry name" value="CTP_transf_like"/>
    <property type="match status" value="1"/>
</dbReference>
<dbReference type="Pfam" id="PF00294">
    <property type="entry name" value="PfkB"/>
    <property type="match status" value="1"/>
</dbReference>
<dbReference type="SUPFAM" id="SSF52374">
    <property type="entry name" value="Nucleotidylyl transferase"/>
    <property type="match status" value="1"/>
</dbReference>
<dbReference type="SUPFAM" id="SSF53613">
    <property type="entry name" value="Ribokinase-like"/>
    <property type="match status" value="1"/>
</dbReference>
<dbReference type="PROSITE" id="PS00583">
    <property type="entry name" value="PFKB_KINASES_1"/>
    <property type="match status" value="1"/>
</dbReference>
<dbReference type="PROSITE" id="PS00584">
    <property type="entry name" value="PFKB_KINASES_2"/>
    <property type="match status" value="1"/>
</dbReference>
<keyword id="KW-0067">ATP-binding</keyword>
<keyword id="KW-0119">Carbohydrate metabolism</keyword>
<keyword id="KW-0418">Kinase</keyword>
<keyword id="KW-0511">Multifunctional enzyme</keyword>
<keyword id="KW-0547">Nucleotide-binding</keyword>
<keyword id="KW-0548">Nucleotidyltransferase</keyword>
<keyword id="KW-1185">Reference proteome</keyword>
<keyword id="KW-0808">Transferase</keyword>